<name>RNB3L_HUMAN</name>
<gene>
    <name type="primary">RANBP3L</name>
</gene>
<sequence length="465" mass="52211">MTTIPRKGSSHLPGSLHTCKLKLQEDRRQQEKSVIAQPIFVFEKGEQTFKRPAEDTLYEAAEPECNGFPTKRVRSSSFTFHITDSQSQGVRKNNVFMTSALVQSSVDIKSAEQGPVKHSKHVIRPAILQLPQARSCAKVRKTFGHKALESCKTKEKTNNKISEGNSYLLSENLSRARISVQLSTNQDFLGATSVGCQPNEDKCSFKSCSSNFVFGENMVERVLGTQKLTQPQLENDSYAKEKPFKSIPKFPVNFLSSRTDSIKNTSLIESAAAFSSQPSRKCLLEKIDVITGEETEHNVLKINCKLFIFNKTTQSWIERGRGTLRLNDTASTDCGTLQSRLIMRNQGSLRLILNSKLWAQMKIQRANHKNVRITATDLEDYSIKIFLIQASAQDTAYLYAAIHHRLVALQSFNKQRDVNQAESLSETAQQLNCESCDENEDDFIQVTKNGSDPSSWTHRQSVACS</sequence>
<feature type="chain" id="PRO_0000312749" description="Ran-binding protein 3-like">
    <location>
        <begin position="1"/>
        <end position="465"/>
    </location>
</feature>
<feature type="domain" description="RanBD1" evidence="2">
    <location>
        <begin position="276"/>
        <end position="417"/>
    </location>
</feature>
<feature type="splice variant" id="VSP_044463" description="In isoform 3." evidence="7">
    <original>G</original>
    <variation>GVSTLSQKQMRCSSVTNLPTFPHSGP</variation>
    <location>
        <position position="89"/>
    </location>
</feature>
<feature type="splice variant" id="VSP_029893" description="In isoform 2." evidence="7">
    <original>INCKLFIFNKTTQSWIERGR</original>
    <variation>VCISCFTLSGSIYILGIKLT</variation>
    <location>
        <begin position="302"/>
        <end position="321"/>
    </location>
</feature>
<feature type="splice variant" id="VSP_029894" description="In isoform 2." evidence="7">
    <location>
        <begin position="322"/>
        <end position="465"/>
    </location>
</feature>
<feature type="sequence variant" id="VAR_037557" description="In dbSNP:rs1035480." evidence="3 4 5">
    <original>T</original>
    <variation>R</variation>
    <location>
        <position position="70"/>
    </location>
</feature>
<feature type="sequence variant" id="VAR_037558" description="In dbSNP:rs35433829.">
    <original>A</original>
    <variation>D</variation>
    <location>
        <position position="111"/>
    </location>
</feature>
<feature type="sequence variant" id="VAR_037559" description="In dbSNP:rs16902872.">
    <original>A</original>
    <variation>V</variation>
    <location>
        <position position="271"/>
    </location>
</feature>
<feature type="sequence conflict" description="In Ref. 1; BAH13852." evidence="8" ref="1">
    <original>Q</original>
    <variation>R</variation>
    <location>
        <position position="181"/>
    </location>
</feature>
<reference key="1">
    <citation type="journal article" date="2004" name="Nat. Genet.">
        <title>Complete sequencing and characterization of 21,243 full-length human cDNAs.</title>
        <authorList>
            <person name="Ota T."/>
            <person name="Suzuki Y."/>
            <person name="Nishikawa T."/>
            <person name="Otsuki T."/>
            <person name="Sugiyama T."/>
            <person name="Irie R."/>
            <person name="Wakamatsu A."/>
            <person name="Hayashi K."/>
            <person name="Sato H."/>
            <person name="Nagai K."/>
            <person name="Kimura K."/>
            <person name="Makita H."/>
            <person name="Sekine M."/>
            <person name="Obayashi M."/>
            <person name="Nishi T."/>
            <person name="Shibahara T."/>
            <person name="Tanaka T."/>
            <person name="Ishii S."/>
            <person name="Yamamoto J."/>
            <person name="Saito K."/>
            <person name="Kawai Y."/>
            <person name="Isono Y."/>
            <person name="Nakamura Y."/>
            <person name="Nagahari K."/>
            <person name="Murakami K."/>
            <person name="Yasuda T."/>
            <person name="Iwayanagi T."/>
            <person name="Wagatsuma M."/>
            <person name="Shiratori A."/>
            <person name="Sudo H."/>
            <person name="Hosoiri T."/>
            <person name="Kaku Y."/>
            <person name="Kodaira H."/>
            <person name="Kondo H."/>
            <person name="Sugawara M."/>
            <person name="Takahashi M."/>
            <person name="Kanda K."/>
            <person name="Yokoi T."/>
            <person name="Furuya T."/>
            <person name="Kikkawa E."/>
            <person name="Omura Y."/>
            <person name="Abe K."/>
            <person name="Kamihara K."/>
            <person name="Katsuta N."/>
            <person name="Sato K."/>
            <person name="Tanikawa M."/>
            <person name="Yamazaki M."/>
            <person name="Ninomiya K."/>
            <person name="Ishibashi T."/>
            <person name="Yamashita H."/>
            <person name="Murakawa K."/>
            <person name="Fujimori K."/>
            <person name="Tanai H."/>
            <person name="Kimata M."/>
            <person name="Watanabe M."/>
            <person name="Hiraoka S."/>
            <person name="Chiba Y."/>
            <person name="Ishida S."/>
            <person name="Ono Y."/>
            <person name="Takiguchi S."/>
            <person name="Watanabe S."/>
            <person name="Yosida M."/>
            <person name="Hotuta T."/>
            <person name="Kusano J."/>
            <person name="Kanehori K."/>
            <person name="Takahashi-Fujii A."/>
            <person name="Hara H."/>
            <person name="Tanase T.-O."/>
            <person name="Nomura Y."/>
            <person name="Togiya S."/>
            <person name="Komai F."/>
            <person name="Hara R."/>
            <person name="Takeuchi K."/>
            <person name="Arita M."/>
            <person name="Imose N."/>
            <person name="Musashino K."/>
            <person name="Yuuki H."/>
            <person name="Oshima A."/>
            <person name="Sasaki N."/>
            <person name="Aotsuka S."/>
            <person name="Yoshikawa Y."/>
            <person name="Matsunawa H."/>
            <person name="Ichihara T."/>
            <person name="Shiohata N."/>
            <person name="Sano S."/>
            <person name="Moriya S."/>
            <person name="Momiyama H."/>
            <person name="Satoh N."/>
            <person name="Takami S."/>
            <person name="Terashima Y."/>
            <person name="Suzuki O."/>
            <person name="Nakagawa S."/>
            <person name="Senoh A."/>
            <person name="Mizoguchi H."/>
            <person name="Goto Y."/>
            <person name="Shimizu F."/>
            <person name="Wakebe H."/>
            <person name="Hishigaki H."/>
            <person name="Watanabe T."/>
            <person name="Sugiyama A."/>
            <person name="Takemoto M."/>
            <person name="Kawakami B."/>
            <person name="Yamazaki M."/>
            <person name="Watanabe K."/>
            <person name="Kumagai A."/>
            <person name="Itakura S."/>
            <person name="Fukuzumi Y."/>
            <person name="Fujimori Y."/>
            <person name="Komiyama M."/>
            <person name="Tashiro H."/>
            <person name="Tanigami A."/>
            <person name="Fujiwara T."/>
            <person name="Ono T."/>
            <person name="Yamada K."/>
            <person name="Fujii Y."/>
            <person name="Ozaki K."/>
            <person name="Hirao M."/>
            <person name="Ohmori Y."/>
            <person name="Kawabata A."/>
            <person name="Hikiji T."/>
            <person name="Kobatake N."/>
            <person name="Inagaki H."/>
            <person name="Ikema Y."/>
            <person name="Okamoto S."/>
            <person name="Okitani R."/>
            <person name="Kawakami T."/>
            <person name="Noguchi S."/>
            <person name="Itoh T."/>
            <person name="Shigeta K."/>
            <person name="Senba T."/>
            <person name="Matsumura K."/>
            <person name="Nakajima Y."/>
            <person name="Mizuno T."/>
            <person name="Morinaga M."/>
            <person name="Sasaki M."/>
            <person name="Togashi T."/>
            <person name="Oyama M."/>
            <person name="Hata H."/>
            <person name="Watanabe M."/>
            <person name="Komatsu T."/>
            <person name="Mizushima-Sugano J."/>
            <person name="Satoh T."/>
            <person name="Shirai Y."/>
            <person name="Takahashi Y."/>
            <person name="Nakagawa K."/>
            <person name="Okumura K."/>
            <person name="Nagase T."/>
            <person name="Nomura N."/>
            <person name="Kikuchi H."/>
            <person name="Masuho Y."/>
            <person name="Yamashita R."/>
            <person name="Nakai K."/>
            <person name="Yada T."/>
            <person name="Nakamura Y."/>
            <person name="Ohara O."/>
            <person name="Isogai T."/>
            <person name="Sugano S."/>
        </authorList>
    </citation>
    <scope>NUCLEOTIDE SEQUENCE [LARGE SCALE MRNA] (ISOFORMS 2 AND 3)</scope>
    <scope>VARIANT ARG-70</scope>
    <source>
        <tissue>Testis</tissue>
    </source>
</reference>
<reference key="2">
    <citation type="journal article" date="2004" name="Nature">
        <title>The DNA sequence and comparative analysis of human chromosome 5.</title>
        <authorList>
            <person name="Schmutz J."/>
            <person name="Martin J."/>
            <person name="Terry A."/>
            <person name="Couronne O."/>
            <person name="Grimwood J."/>
            <person name="Lowry S."/>
            <person name="Gordon L.A."/>
            <person name="Scott D."/>
            <person name="Xie G."/>
            <person name="Huang W."/>
            <person name="Hellsten U."/>
            <person name="Tran-Gyamfi M."/>
            <person name="She X."/>
            <person name="Prabhakar S."/>
            <person name="Aerts A."/>
            <person name="Altherr M."/>
            <person name="Bajorek E."/>
            <person name="Black S."/>
            <person name="Branscomb E."/>
            <person name="Caoile C."/>
            <person name="Challacombe J.F."/>
            <person name="Chan Y.M."/>
            <person name="Denys M."/>
            <person name="Detter J.C."/>
            <person name="Escobar J."/>
            <person name="Flowers D."/>
            <person name="Fotopulos D."/>
            <person name="Glavina T."/>
            <person name="Gomez M."/>
            <person name="Gonzales E."/>
            <person name="Goodstein D."/>
            <person name="Grigoriev I."/>
            <person name="Groza M."/>
            <person name="Hammon N."/>
            <person name="Hawkins T."/>
            <person name="Haydu L."/>
            <person name="Israni S."/>
            <person name="Jett J."/>
            <person name="Kadner K."/>
            <person name="Kimball H."/>
            <person name="Kobayashi A."/>
            <person name="Lopez F."/>
            <person name="Lou Y."/>
            <person name="Martinez D."/>
            <person name="Medina C."/>
            <person name="Morgan J."/>
            <person name="Nandkeshwar R."/>
            <person name="Noonan J.P."/>
            <person name="Pitluck S."/>
            <person name="Pollard M."/>
            <person name="Predki P."/>
            <person name="Priest J."/>
            <person name="Ramirez L."/>
            <person name="Retterer J."/>
            <person name="Rodriguez A."/>
            <person name="Rogers S."/>
            <person name="Salamov A."/>
            <person name="Salazar A."/>
            <person name="Thayer N."/>
            <person name="Tice H."/>
            <person name="Tsai M."/>
            <person name="Ustaszewska A."/>
            <person name="Vo N."/>
            <person name="Wheeler J."/>
            <person name="Wu K."/>
            <person name="Yang J."/>
            <person name="Dickson M."/>
            <person name="Cheng J.-F."/>
            <person name="Eichler E.E."/>
            <person name="Olsen A."/>
            <person name="Pennacchio L.A."/>
            <person name="Rokhsar D.S."/>
            <person name="Richardson P."/>
            <person name="Lucas S.M."/>
            <person name="Myers R.M."/>
            <person name="Rubin E.M."/>
        </authorList>
    </citation>
    <scope>NUCLEOTIDE SEQUENCE [LARGE SCALE GENOMIC DNA]</scope>
    <scope>VARIANT ARG-70</scope>
</reference>
<reference key="3">
    <citation type="submission" date="2005-07" db="EMBL/GenBank/DDBJ databases">
        <authorList>
            <person name="Mural R.J."/>
            <person name="Istrail S."/>
            <person name="Sutton G.G."/>
            <person name="Florea L."/>
            <person name="Halpern A.L."/>
            <person name="Mobarry C.M."/>
            <person name="Lippert R."/>
            <person name="Walenz B."/>
            <person name="Shatkay H."/>
            <person name="Dew I."/>
            <person name="Miller J.R."/>
            <person name="Flanigan M.J."/>
            <person name="Edwards N.J."/>
            <person name="Bolanos R."/>
            <person name="Fasulo D."/>
            <person name="Halldorsson B.V."/>
            <person name="Hannenhalli S."/>
            <person name="Turner R."/>
            <person name="Yooseph S."/>
            <person name="Lu F."/>
            <person name="Nusskern D.R."/>
            <person name="Shue B.C."/>
            <person name="Zheng X.H."/>
            <person name="Zhong F."/>
            <person name="Delcher A.L."/>
            <person name="Huson D.H."/>
            <person name="Kravitz S.A."/>
            <person name="Mouchard L."/>
            <person name="Reinert K."/>
            <person name="Remington K.A."/>
            <person name="Clark A.G."/>
            <person name="Waterman M.S."/>
            <person name="Eichler E.E."/>
            <person name="Adams M.D."/>
            <person name="Hunkapiller M.W."/>
            <person name="Myers E.W."/>
            <person name="Venter J.C."/>
        </authorList>
    </citation>
    <scope>NUCLEOTIDE SEQUENCE [LARGE SCALE GENOMIC DNA]</scope>
</reference>
<reference key="4">
    <citation type="journal article" date="2004" name="Genome Res.">
        <title>The status, quality, and expansion of the NIH full-length cDNA project: the Mammalian Gene Collection (MGC).</title>
        <authorList>
            <consortium name="The MGC Project Team"/>
        </authorList>
    </citation>
    <scope>NUCLEOTIDE SEQUENCE [LARGE SCALE MRNA] (ISOFORM 1)</scope>
    <scope>VARIANT ARG-70</scope>
    <source>
        <tissue>Brain</tissue>
    </source>
</reference>
<reference key="5">
    <citation type="journal article" date="2015" name="Mol. Cell. Biol.">
        <title>Nuclear export of Smads by RanBP3L regulates bone morphogenetic protein signaling and mesenchymal stem cell differentiation.</title>
        <authorList>
            <person name="Chen F."/>
            <person name="Lin X."/>
            <person name="Xu P."/>
            <person name="Zhang Z."/>
            <person name="Chen Y."/>
            <person name="Wang C."/>
            <person name="Han J."/>
            <person name="Zhao B."/>
            <person name="Xiao M."/>
            <person name="Feng X.H."/>
        </authorList>
    </citation>
    <scope>INTERACTION WITH SMAD1; SMAD5 AND SMAD8</scope>
    <scope>SUBCELLULAR LOCATION</scope>
</reference>
<comment type="function">
    <text evidence="1 6">Nuclear export factor for BMP-specific SMAD1/5/8 that plays a critical role in terminating BMP signaling and regulating mesenchymal stem cell differentiation by blocking osteoblast differentiation to promote myogenic differention. Directly recognizes dephosphorylated SMAD1/5/8 and mediates their nuclear export in a Ran-dependent manner.</text>
</comment>
<comment type="subunit">
    <text evidence="1 6">Interacts with SMAD1, SMAD5 and SMAD8; the interaction (with SMAD at least) increases when SMAD1 is not phosphorylated and mediates SMAD1 nuclear export.</text>
</comment>
<comment type="interaction">
    <interactant intactId="EBI-12028066">
        <id>Q86VV4</id>
    </interactant>
    <interactant intactId="EBI-618309">
        <id>Q08379</id>
        <label>GOLGA2</label>
    </interactant>
    <organismsDiffer>false</organismsDiffer>
    <experiments>3</experiments>
</comment>
<comment type="interaction">
    <interactant intactId="EBI-12028066">
        <id>Q86VV4</id>
    </interactant>
    <interactant intactId="EBI-5916454">
        <id>A6NEM1</id>
        <label>GOLGA6L9</label>
    </interactant>
    <organismsDiffer>false</organismsDiffer>
    <experiments>3</experiments>
</comment>
<comment type="interaction">
    <interactant intactId="EBI-12028066">
        <id>Q86VV4</id>
    </interactant>
    <interactant intactId="EBI-10213781">
        <id>Q5T7B8-2</id>
        <label>KIF24</label>
    </interactant>
    <organismsDiffer>false</organismsDiffer>
    <experiments>3</experiments>
</comment>
<comment type="interaction">
    <interactant intactId="EBI-12028066">
        <id>Q86VV4</id>
    </interactant>
    <interactant intactId="EBI-10172526">
        <id>Q9UJV3-2</id>
        <label>MID2</label>
    </interactant>
    <organismsDiffer>false</organismsDiffer>
    <experiments>3</experiments>
</comment>
<comment type="interaction">
    <interactant intactId="EBI-12028066">
        <id>Q86VV4</id>
    </interactant>
    <interactant intactId="EBI-11522433">
        <id>Q5JR59-3</id>
        <label>MTUS2</label>
    </interactant>
    <organismsDiffer>false</organismsDiffer>
    <experiments>3</experiments>
</comment>
<comment type="interaction">
    <interactant intactId="EBI-12028066">
        <id>Q86VV4</id>
    </interactant>
    <interactant intactId="EBI-742327">
        <id>Q15654</id>
        <label>TRIP6</label>
    </interactant>
    <organismsDiffer>false</organismsDiffer>
    <experiments>3</experiments>
</comment>
<comment type="subcellular location">
    <subcellularLocation>
        <location evidence="9">Nucleus</location>
    </subcellularLocation>
    <subcellularLocation>
        <location evidence="9">Cytoplasm</location>
    </subcellularLocation>
</comment>
<comment type="alternative products">
    <event type="alternative splicing"/>
    <isoform>
        <id>Q86VV4-1</id>
        <name>1</name>
        <sequence type="displayed"/>
    </isoform>
    <isoform>
        <id>Q86VV4-2</id>
        <name>2</name>
        <sequence type="described" ref="VSP_029893 VSP_029894"/>
    </isoform>
    <isoform>
        <id>Q86VV4-3</id>
        <name>3</name>
        <sequence type="described" ref="VSP_044463"/>
    </isoform>
</comment>
<accession>Q86VV4</accession>
<accession>B7Z866</accession>
<accession>E9PGP9</accession>
<accession>Q96LK2</accession>
<proteinExistence type="evidence at protein level"/>
<evidence type="ECO:0000250" key="1">
    <source>
        <dbReference type="UniProtKB" id="Q6PDH4"/>
    </source>
</evidence>
<evidence type="ECO:0000255" key="2">
    <source>
        <dbReference type="PROSITE-ProRule" id="PRU00164"/>
    </source>
</evidence>
<evidence type="ECO:0000269" key="3">
    <source>
    </source>
</evidence>
<evidence type="ECO:0000269" key="4">
    <source>
    </source>
</evidence>
<evidence type="ECO:0000269" key="5">
    <source>
    </source>
</evidence>
<evidence type="ECO:0000269" key="6">
    <source>
    </source>
</evidence>
<evidence type="ECO:0000303" key="7">
    <source>
    </source>
</evidence>
<evidence type="ECO:0000305" key="8"/>
<evidence type="ECO:0000305" key="9">
    <source>
    </source>
</evidence>
<protein>
    <recommendedName>
        <fullName>Ran-binding protein 3-like</fullName>
    </recommendedName>
</protein>
<keyword id="KW-0025">Alternative splicing</keyword>
<keyword id="KW-0963">Cytoplasm</keyword>
<keyword id="KW-0539">Nucleus</keyword>
<keyword id="KW-1267">Proteomics identification</keyword>
<keyword id="KW-1185">Reference proteome</keyword>
<dbReference type="EMBL" id="AK058151">
    <property type="protein sequence ID" value="BAB71689.1"/>
    <property type="molecule type" value="mRNA"/>
</dbReference>
<dbReference type="EMBL" id="AK302947">
    <property type="protein sequence ID" value="BAH13852.1"/>
    <property type="molecule type" value="mRNA"/>
</dbReference>
<dbReference type="EMBL" id="AC008807">
    <property type="status" value="NOT_ANNOTATED_CDS"/>
    <property type="molecule type" value="Genomic_DNA"/>
</dbReference>
<dbReference type="EMBL" id="AC114277">
    <property type="status" value="NOT_ANNOTATED_CDS"/>
    <property type="molecule type" value="Genomic_DNA"/>
</dbReference>
<dbReference type="EMBL" id="CH471119">
    <property type="protein sequence ID" value="EAW55942.1"/>
    <property type="molecule type" value="Genomic_DNA"/>
</dbReference>
<dbReference type="EMBL" id="CH471119">
    <property type="protein sequence ID" value="EAW55943.1"/>
    <property type="molecule type" value="Genomic_DNA"/>
</dbReference>
<dbReference type="EMBL" id="BC047660">
    <property type="protein sequence ID" value="AAH47660.1"/>
    <property type="molecule type" value="mRNA"/>
</dbReference>
<dbReference type="CCDS" id="CCDS3918.1">
    <molecule id="Q86VV4-1"/>
</dbReference>
<dbReference type="CCDS" id="CCDS54843.1">
    <molecule id="Q86VV4-3"/>
</dbReference>
<dbReference type="RefSeq" id="NP_001154901.1">
    <molecule id="Q86VV4-3"/>
    <property type="nucleotide sequence ID" value="NM_001161429.3"/>
</dbReference>
<dbReference type="RefSeq" id="NP_001310202.1">
    <property type="nucleotide sequence ID" value="NM_001323273.1"/>
</dbReference>
<dbReference type="RefSeq" id="NP_001310203.1">
    <property type="nucleotide sequence ID" value="NM_001323274.1"/>
</dbReference>
<dbReference type="RefSeq" id="NP_001310204.1">
    <property type="nucleotide sequence ID" value="NM_001323275.1"/>
</dbReference>
<dbReference type="RefSeq" id="NP_001310205.1">
    <property type="nucleotide sequence ID" value="NM_001323276.1"/>
</dbReference>
<dbReference type="RefSeq" id="NP_001310206.1">
    <property type="nucleotide sequence ID" value="NM_001323277.1"/>
</dbReference>
<dbReference type="RefSeq" id="NP_001310207.1">
    <property type="nucleotide sequence ID" value="NM_001323278.1"/>
</dbReference>
<dbReference type="RefSeq" id="NP_001310208.1">
    <property type="nucleotide sequence ID" value="NM_001323279.1"/>
</dbReference>
<dbReference type="RefSeq" id="NP_001310209.1">
    <property type="nucleotide sequence ID" value="NM_001323280.1"/>
</dbReference>
<dbReference type="RefSeq" id="NP_659437.3">
    <molecule id="Q86VV4-1"/>
    <property type="nucleotide sequence ID" value="NM_145000.4"/>
</dbReference>
<dbReference type="SMR" id="Q86VV4"/>
<dbReference type="BioGRID" id="128419">
    <property type="interactions" value="12"/>
</dbReference>
<dbReference type="FunCoup" id="Q86VV4">
    <property type="interactions" value="19"/>
</dbReference>
<dbReference type="IntAct" id="Q86VV4">
    <property type="interactions" value="8"/>
</dbReference>
<dbReference type="STRING" id="9606.ENSP00000421853"/>
<dbReference type="iPTMnet" id="Q86VV4"/>
<dbReference type="PhosphoSitePlus" id="Q86VV4"/>
<dbReference type="BioMuta" id="RANBP3L"/>
<dbReference type="DMDM" id="317373276"/>
<dbReference type="jPOST" id="Q86VV4"/>
<dbReference type="MassIVE" id="Q86VV4"/>
<dbReference type="PaxDb" id="9606-ENSP00000421853"/>
<dbReference type="PeptideAtlas" id="Q86VV4"/>
<dbReference type="ProteomicsDB" id="20364"/>
<dbReference type="ProteomicsDB" id="70072">
    <molecule id="Q86VV4-1"/>
</dbReference>
<dbReference type="ProteomicsDB" id="70073">
    <molecule id="Q86VV4-2"/>
</dbReference>
<dbReference type="Antibodypedia" id="43549">
    <property type="antibodies" value="85 antibodies from 18 providers"/>
</dbReference>
<dbReference type="DNASU" id="202151"/>
<dbReference type="Ensembl" id="ENST00000296604.8">
    <molecule id="Q86VV4-1"/>
    <property type="protein sequence ID" value="ENSP00000296604.3"/>
    <property type="gene ID" value="ENSG00000164188.9"/>
</dbReference>
<dbReference type="Ensembl" id="ENST00000502994.5">
    <molecule id="Q86VV4-3"/>
    <property type="protein sequence ID" value="ENSP00000421853.1"/>
    <property type="gene ID" value="ENSG00000164188.9"/>
</dbReference>
<dbReference type="Ensembl" id="ENST00000515759.5">
    <molecule id="Q86VV4-2"/>
    <property type="protein sequence ID" value="ENSP00000421149.1"/>
    <property type="gene ID" value="ENSG00000164188.9"/>
</dbReference>
<dbReference type="GeneID" id="202151"/>
<dbReference type="KEGG" id="hsa:202151"/>
<dbReference type="MANE-Select" id="ENST00000296604.8">
    <property type="protein sequence ID" value="ENSP00000296604.3"/>
    <property type="RefSeq nucleotide sequence ID" value="NM_145000.5"/>
    <property type="RefSeq protein sequence ID" value="NP_659437.3"/>
</dbReference>
<dbReference type="UCSC" id="uc003jkh.4">
    <molecule id="Q86VV4-1"/>
    <property type="organism name" value="human"/>
</dbReference>
<dbReference type="AGR" id="HGNC:26353"/>
<dbReference type="CTD" id="202151"/>
<dbReference type="DisGeNET" id="202151"/>
<dbReference type="GeneCards" id="RANBP3L"/>
<dbReference type="HGNC" id="HGNC:26353">
    <property type="gene designation" value="RANBP3L"/>
</dbReference>
<dbReference type="HPA" id="ENSG00000164188">
    <property type="expression patterns" value="Tissue enhanced (brain, kidney)"/>
</dbReference>
<dbReference type="MIM" id="616391">
    <property type="type" value="gene"/>
</dbReference>
<dbReference type="neXtProt" id="NX_Q86VV4"/>
<dbReference type="OpenTargets" id="ENSG00000164188"/>
<dbReference type="PharmGKB" id="PA162400660"/>
<dbReference type="VEuPathDB" id="HostDB:ENSG00000164188"/>
<dbReference type="eggNOG" id="KOG0866">
    <property type="taxonomic scope" value="Eukaryota"/>
</dbReference>
<dbReference type="GeneTree" id="ENSGT00940000161387"/>
<dbReference type="HOGENOM" id="CLU_046714_0_0_1"/>
<dbReference type="InParanoid" id="Q86VV4"/>
<dbReference type="OMA" id="QMRFSSI"/>
<dbReference type="OrthoDB" id="185618at2759"/>
<dbReference type="PAN-GO" id="Q86VV4">
    <property type="GO annotations" value="4 GO annotations based on evolutionary models"/>
</dbReference>
<dbReference type="PhylomeDB" id="Q86VV4"/>
<dbReference type="TreeFam" id="TF313181"/>
<dbReference type="PathwayCommons" id="Q86VV4"/>
<dbReference type="SignaLink" id="Q86VV4"/>
<dbReference type="BioGRID-ORCS" id="202151">
    <property type="hits" value="8 hits in 1141 CRISPR screens"/>
</dbReference>
<dbReference type="GenomeRNAi" id="202151"/>
<dbReference type="Pharos" id="Q86VV4">
    <property type="development level" value="Tdark"/>
</dbReference>
<dbReference type="PRO" id="PR:Q86VV4"/>
<dbReference type="Proteomes" id="UP000005640">
    <property type="component" value="Chromosome 5"/>
</dbReference>
<dbReference type="RNAct" id="Q86VV4">
    <property type="molecule type" value="protein"/>
</dbReference>
<dbReference type="Bgee" id="ENSG00000164188">
    <property type="expression patterns" value="Expressed in metanephros cortex and 96 other cell types or tissues"/>
</dbReference>
<dbReference type="ExpressionAtlas" id="Q86VV4">
    <property type="expression patterns" value="baseline and differential"/>
</dbReference>
<dbReference type="GO" id="GO:0005737">
    <property type="term" value="C:cytoplasm"/>
    <property type="evidence" value="ECO:0007669"/>
    <property type="project" value="UniProtKB-SubCell"/>
</dbReference>
<dbReference type="GO" id="GO:0005634">
    <property type="term" value="C:nucleus"/>
    <property type="evidence" value="ECO:0007669"/>
    <property type="project" value="UniProtKB-SubCell"/>
</dbReference>
<dbReference type="GO" id="GO:0046332">
    <property type="term" value="F:SMAD binding"/>
    <property type="evidence" value="ECO:0000353"/>
    <property type="project" value="UniProtKB"/>
</dbReference>
<dbReference type="GO" id="GO:1901706">
    <property type="term" value="P:mesenchymal cell differentiation involved in bone development"/>
    <property type="evidence" value="ECO:0000250"/>
    <property type="project" value="UniProtKB"/>
</dbReference>
<dbReference type="GO" id="GO:0045668">
    <property type="term" value="P:negative regulation of osteoblast differentiation"/>
    <property type="evidence" value="ECO:0000250"/>
    <property type="project" value="UniProtKB"/>
</dbReference>
<dbReference type="GO" id="GO:0045663">
    <property type="term" value="P:positive regulation of myoblast differentiation"/>
    <property type="evidence" value="ECO:0000250"/>
    <property type="project" value="UniProtKB"/>
</dbReference>
<dbReference type="GO" id="GO:0006611">
    <property type="term" value="P:protein export from nucleus"/>
    <property type="evidence" value="ECO:0000318"/>
    <property type="project" value="GO_Central"/>
</dbReference>
<dbReference type="CDD" id="cd13180">
    <property type="entry name" value="RanBD_RanBP3"/>
    <property type="match status" value="1"/>
</dbReference>
<dbReference type="FunFam" id="2.30.29.30:FF:000228">
    <property type="entry name" value="ran-binding protein 3-like isoform X2"/>
    <property type="match status" value="1"/>
</dbReference>
<dbReference type="Gene3D" id="2.30.29.30">
    <property type="entry name" value="Pleckstrin-homology domain (PH domain)/Phosphotyrosine-binding domain (PTB)"/>
    <property type="match status" value="1"/>
</dbReference>
<dbReference type="InterPro" id="IPR011993">
    <property type="entry name" value="PH-like_dom_sf"/>
</dbReference>
<dbReference type="InterPro" id="IPR000156">
    <property type="entry name" value="Ran_bind_dom"/>
</dbReference>
<dbReference type="InterPro" id="IPR045255">
    <property type="entry name" value="RanBP1-like"/>
</dbReference>
<dbReference type="PANTHER" id="PTHR23138">
    <property type="entry name" value="RAN BINDING PROTEIN"/>
    <property type="match status" value="1"/>
</dbReference>
<dbReference type="PANTHER" id="PTHR23138:SF88">
    <property type="entry name" value="RAN-BINDING PROTEIN 3-LIKE"/>
    <property type="match status" value="1"/>
</dbReference>
<dbReference type="Pfam" id="PF00638">
    <property type="entry name" value="Ran_BP1"/>
    <property type="match status" value="1"/>
</dbReference>
<dbReference type="SMART" id="SM00160">
    <property type="entry name" value="RanBD"/>
    <property type="match status" value="1"/>
</dbReference>
<dbReference type="SUPFAM" id="SSF50729">
    <property type="entry name" value="PH domain-like"/>
    <property type="match status" value="1"/>
</dbReference>
<dbReference type="PROSITE" id="PS50196">
    <property type="entry name" value="RANBD1"/>
    <property type="match status" value="1"/>
</dbReference>
<organism>
    <name type="scientific">Homo sapiens</name>
    <name type="common">Human</name>
    <dbReference type="NCBI Taxonomy" id="9606"/>
    <lineage>
        <taxon>Eukaryota</taxon>
        <taxon>Metazoa</taxon>
        <taxon>Chordata</taxon>
        <taxon>Craniata</taxon>
        <taxon>Vertebrata</taxon>
        <taxon>Euteleostomi</taxon>
        <taxon>Mammalia</taxon>
        <taxon>Eutheria</taxon>
        <taxon>Euarchontoglires</taxon>
        <taxon>Primates</taxon>
        <taxon>Haplorrhini</taxon>
        <taxon>Catarrhini</taxon>
        <taxon>Hominidae</taxon>
        <taxon>Homo</taxon>
    </lineage>
</organism>